<protein>
    <recommendedName>
        <fullName evidence="1">TRPM8 channel-associated factor 1</fullName>
    </recommendedName>
    <alternativeName>
        <fullName evidence="1">TRP channel-associated factor 1</fullName>
    </alternativeName>
</protein>
<proteinExistence type="evidence at transcript level"/>
<name>TCAF1_PONAB</name>
<dbReference type="EMBL" id="CR859688">
    <property type="protein sequence ID" value="CAH91847.1"/>
    <property type="status" value="ALT_SEQ"/>
    <property type="molecule type" value="mRNA"/>
</dbReference>
<dbReference type="RefSeq" id="NP_001126070.1">
    <property type="nucleotide sequence ID" value="NM_001132598.1"/>
</dbReference>
<dbReference type="FunCoup" id="Q5R8R3">
    <property type="interactions" value="709"/>
</dbReference>
<dbReference type="STRING" id="9601.ENSPPYP00000020335"/>
<dbReference type="MEROPS" id="M98.A03"/>
<dbReference type="GeneID" id="100173022"/>
<dbReference type="KEGG" id="pon:100173022"/>
<dbReference type="CTD" id="9747"/>
<dbReference type="eggNOG" id="ENOG502S2AP">
    <property type="taxonomic scope" value="Eukaryota"/>
</dbReference>
<dbReference type="InParanoid" id="Q5R8R3"/>
<dbReference type="OrthoDB" id="10260387at2759"/>
<dbReference type="Proteomes" id="UP000001595">
    <property type="component" value="Unplaced"/>
</dbReference>
<dbReference type="GO" id="GO:0005886">
    <property type="term" value="C:plasma membrane"/>
    <property type="evidence" value="ECO:0007669"/>
    <property type="project" value="UniProtKB-SubCell"/>
</dbReference>
<dbReference type="GO" id="GO:0044325">
    <property type="term" value="F:transmembrane transporter binding"/>
    <property type="evidence" value="ECO:0007669"/>
    <property type="project" value="TreeGrafter"/>
</dbReference>
<dbReference type="GO" id="GO:0090314">
    <property type="term" value="P:positive regulation of protein targeting to membrane"/>
    <property type="evidence" value="ECO:0007669"/>
    <property type="project" value="TreeGrafter"/>
</dbReference>
<dbReference type="FunFam" id="1.10.390.30:FF:000001">
    <property type="entry name" value="TRPM8 channel-associated factor 1"/>
    <property type="match status" value="1"/>
</dbReference>
<dbReference type="FunFam" id="3.40.390.80:FF:000001">
    <property type="entry name" value="TRPM8 channel-associated factor 1"/>
    <property type="match status" value="1"/>
</dbReference>
<dbReference type="Gene3D" id="3.40.390.80">
    <property type="entry name" value="Peptidase M60, enhancin-like domain 2"/>
    <property type="match status" value="1"/>
</dbReference>
<dbReference type="Gene3D" id="1.10.390.30">
    <property type="entry name" value="Peptidase M60, enhancin-like domain 3"/>
    <property type="match status" value="1"/>
</dbReference>
<dbReference type="InterPro" id="IPR029062">
    <property type="entry name" value="Class_I_gatase-like"/>
</dbReference>
<dbReference type="InterPro" id="IPR035423">
    <property type="entry name" value="M60-like_N"/>
</dbReference>
<dbReference type="InterPro" id="IPR042279">
    <property type="entry name" value="Pep_M60_3"/>
</dbReference>
<dbReference type="InterPro" id="IPR031161">
    <property type="entry name" value="Peptidase_M60_dom"/>
</dbReference>
<dbReference type="InterPro" id="IPR051244">
    <property type="entry name" value="TCAF"/>
</dbReference>
<dbReference type="PANTHER" id="PTHR15730">
    <property type="entry name" value="EXPERIMENTAL AUTOIMMUNE PROSTATITIS ANTIGEN 2-RELATED"/>
    <property type="match status" value="1"/>
</dbReference>
<dbReference type="PANTHER" id="PTHR15730:SF1">
    <property type="entry name" value="TRPM8 CHANNEL-ASSOCIATED FACTOR 1"/>
    <property type="match status" value="1"/>
</dbReference>
<dbReference type="Pfam" id="PF17291">
    <property type="entry name" value="M60-like_N"/>
    <property type="match status" value="1"/>
</dbReference>
<dbReference type="Pfam" id="PF13402">
    <property type="entry name" value="Peptidase_M60"/>
    <property type="match status" value="1"/>
</dbReference>
<dbReference type="SMART" id="SM01276">
    <property type="entry name" value="M60-like"/>
    <property type="match status" value="1"/>
</dbReference>
<dbReference type="SUPFAM" id="SSF52317">
    <property type="entry name" value="Class I glutamine amidotransferase-like"/>
    <property type="match status" value="1"/>
</dbReference>
<dbReference type="PROSITE" id="PS51723">
    <property type="entry name" value="PEPTIDASE_M60"/>
    <property type="match status" value="1"/>
</dbReference>
<evidence type="ECO:0000250" key="1">
    <source>
        <dbReference type="UniProtKB" id="Q9Y4C2"/>
    </source>
</evidence>
<evidence type="ECO:0000255" key="2">
    <source>
        <dbReference type="PROSITE-ProRule" id="PRU01060"/>
    </source>
</evidence>
<evidence type="ECO:0000305" key="3"/>
<sequence>MATPSAAFEALMNGVTSWDVPEDAVPCELLLIGEASFPVMVNDMGQVLIATSSYGRGRLVVVSHEDYLVEAQLTPFLLNAVGWLCSSPGAPIGVHPSLAPLAKILEGSGVDAKVEPEVKDSLGVYCIDAYNETMTEKLVKFMKRGGGLLIGGQAWDWANQGEDERVLFTFPGNLVTSVAGIYFTDNKGDTSFFKVSKKMPKIPVLVSCEDDLSEDREELLHGISELDISNSDCFPSQLLVHGALAFPLGLDSYHGCVIAAARYGRGRVVVTGHKVLFTVGKLGPFLLNAVRWLDGGRRGKVVVQTELRTLSGLLAVGGIDTSIEPNLTSDASVYCFEPVSEVGVKELQEFVAEGGGLFVGAQAWWWAFKNPGVSPLARFPGNLLLNPFGISITSQSLNPGPFRTPKAGIRTYHFRSTLAEFQVIMGRKRGNVEKGWLAKLGPDGAAFLQIPAEEIPAYMSVHRLLRKLLSRYRLPVATRENPVINDCCRGAMLSLATGLAHSGSDLSLLVPEIEDMYSSPYLRPSESPITVEVNCTNPGTRYCWMSTGLYIPGRQIIEVSLPEAAASADLKIQIGCHTDDLTRASKLFRGPLVINRCCLDKPTKSITCLWGGLLYIIVPQNSKLGSVPVTVKGAVHAPYYKLGETTLEEWKRHIQENPGPWGELATDNIILTVPTANLRTLENPEPLLRLWDEVMQAVARLGAEPFPLRLPQRIVADVQISVGWMHAGYPIMCHLESVQELINEKLIRTKGLWGPVHELGRNQQRQEWEFPPHTTEATCNLWCVYVHETVLGIPRSRANIALWPPVREKRVRIYLSKGPNVKNWNAWTALETYLQLQEAFGWEPFIRLFTEYRNQTNLPTDNVDKMNLWVKMFSHQVQKNLAPFFEAWAWPIQKEVTTSLAYLPEWKENIMKLYLLTQMPH</sequence>
<gene>
    <name evidence="1" type="primary">TCAF1</name>
    <name type="synonym">FAM115A</name>
</gene>
<accession>Q5R8R3</accession>
<keyword id="KW-1003">Cell membrane</keyword>
<keyword id="KW-0472">Membrane</keyword>
<keyword id="KW-1185">Reference proteome</keyword>
<keyword id="KW-0813">Transport</keyword>
<feature type="chain" id="PRO_0000320184" description="TRPM8 channel-associated factor 1">
    <location>
        <begin position="1"/>
        <end position="921"/>
    </location>
</feature>
<feature type="domain" description="Peptidase M60" evidence="2">
    <location>
        <begin position="542"/>
        <end position="841"/>
    </location>
</feature>
<organism>
    <name type="scientific">Pongo abelii</name>
    <name type="common">Sumatran orangutan</name>
    <name type="synonym">Pongo pygmaeus abelii</name>
    <dbReference type="NCBI Taxonomy" id="9601"/>
    <lineage>
        <taxon>Eukaryota</taxon>
        <taxon>Metazoa</taxon>
        <taxon>Chordata</taxon>
        <taxon>Craniata</taxon>
        <taxon>Vertebrata</taxon>
        <taxon>Euteleostomi</taxon>
        <taxon>Mammalia</taxon>
        <taxon>Eutheria</taxon>
        <taxon>Euarchontoglires</taxon>
        <taxon>Primates</taxon>
        <taxon>Haplorrhini</taxon>
        <taxon>Catarrhini</taxon>
        <taxon>Hominidae</taxon>
        <taxon>Pongo</taxon>
    </lineage>
</organism>
<reference key="1">
    <citation type="submission" date="2004-11" db="EMBL/GenBank/DDBJ databases">
        <authorList>
            <consortium name="The German cDNA consortium"/>
        </authorList>
    </citation>
    <scope>NUCLEOTIDE SEQUENCE [LARGE SCALE MRNA]</scope>
    <source>
        <tissue>Kidney</tissue>
    </source>
</reference>
<comment type="function">
    <text evidence="1">Positively regulates the plasma membrane cation channel TRPM8 activity. Involved in the recruitment of TRPM8 to the cell surface. Promotes prostate cancer cell migration inhibition in a TRPM8-dependent manner.</text>
</comment>
<comment type="subunit">
    <text evidence="1">Interacts with TRPM8 (via N-terminus and C-terminus domains); the interaction inhibits TRPM8 channel activity. Interacts with TRPV6.</text>
</comment>
<comment type="subcellular location">
    <subcellularLocation>
        <location evidence="1">Cell membrane</location>
    </subcellularLocation>
    <text evidence="1">Colocalizes with TRPM8 on the plasma membrane.</text>
</comment>
<comment type="domain">
    <text evidence="1">The C-terminal region is necessary for the channel activity stimulation.</text>
</comment>
<comment type="similarity">
    <text evidence="3">Belongs to the TCAF family.</text>
</comment>
<comment type="sequence caution" evidence="3">
    <conflict type="erroneous termination">
        <sequence resource="EMBL-CDS" id="CAH91847"/>
    </conflict>
    <text>Truncated C-terminus.</text>
</comment>